<comment type="function">
    <text evidence="1">Small polypeptide acting as a regulatory molecule which coordinates cellular responses required for differentiation, growth and development, probably by restricting polar cell proliferation in lateral organs and coordinating socket cell recruitment and differentiation at trichome sites.</text>
</comment>
<comment type="subcellular location">
    <subcellularLocation>
        <location evidence="2">Cell membrane</location>
        <topology evidence="3">Single-pass membrane protein</topology>
    </subcellularLocation>
</comment>
<comment type="similarity">
    <text evidence="5">Belongs to the DVL/RTFL small polypeptides family.</text>
</comment>
<comment type="sequence caution" evidence="5">
    <conflict type="frameshift">
        <sequence resource="EMBL" id="EG506155"/>
    </conflict>
</comment>
<sequence length="119" mass="13646">MCIILHSCTARLPQAQNLQIELKQDQVQASFKSNEKKNSIFIKLVSEKPMLINRRVESSNLLHSNMGGFLAKKTNSNSKIRNSFTSKCTSLMKQQHARLCIIRLCATMLLRSYTDHDDY</sequence>
<protein>
    <recommendedName>
        <fullName evidence="5">Small polypeptide DEVIL 24</fullName>
    </recommendedName>
    <alternativeName>
        <fullName evidence="4">Small polypeptide ROTUNDIFOLIA LIKE 11</fullName>
        <shortName evidence="4">Small polypeptide ROT-FOUR-LIKE 11</shortName>
    </alternativeName>
</protein>
<evidence type="ECO:0000250" key="1">
    <source>
        <dbReference type="UniProtKB" id="Q6X5V0"/>
    </source>
</evidence>
<evidence type="ECO:0000250" key="2">
    <source>
        <dbReference type="UniProtKB" id="Q7XXN8"/>
    </source>
</evidence>
<evidence type="ECO:0000255" key="3"/>
<evidence type="ECO:0000303" key="4">
    <source>
    </source>
</evidence>
<evidence type="ECO:0000305" key="5"/>
<evidence type="ECO:0000312" key="6">
    <source>
        <dbReference type="Araport" id="AT1G17235"/>
    </source>
</evidence>
<evidence type="ECO:0000312" key="7">
    <source>
        <dbReference type="EMBL" id="AC007651"/>
    </source>
</evidence>
<accession>A8MS09</accession>
<organism>
    <name type="scientific">Arabidopsis thaliana</name>
    <name type="common">Mouse-ear cress</name>
    <dbReference type="NCBI Taxonomy" id="3702"/>
    <lineage>
        <taxon>Eukaryota</taxon>
        <taxon>Viridiplantae</taxon>
        <taxon>Streptophyta</taxon>
        <taxon>Embryophyta</taxon>
        <taxon>Tracheophyta</taxon>
        <taxon>Spermatophyta</taxon>
        <taxon>Magnoliopsida</taxon>
        <taxon>eudicotyledons</taxon>
        <taxon>Gunneridae</taxon>
        <taxon>Pentapetalae</taxon>
        <taxon>rosids</taxon>
        <taxon>malvids</taxon>
        <taxon>Brassicales</taxon>
        <taxon>Brassicaceae</taxon>
        <taxon>Camelineae</taxon>
        <taxon>Arabidopsis</taxon>
    </lineage>
</organism>
<dbReference type="EMBL" id="AC007651">
    <property type="status" value="NOT_ANNOTATED_CDS"/>
    <property type="molecule type" value="Genomic_DNA"/>
</dbReference>
<dbReference type="EMBL" id="CP002684">
    <property type="protein sequence ID" value="AEE29562.1"/>
    <property type="molecule type" value="Genomic_DNA"/>
</dbReference>
<dbReference type="EMBL" id="EG506155">
    <property type="status" value="NOT_ANNOTATED_CDS"/>
    <property type="molecule type" value="mRNA"/>
</dbReference>
<dbReference type="EMBL" id="EG521118">
    <property type="status" value="NOT_ANNOTATED_CDS"/>
    <property type="molecule type" value="mRNA"/>
</dbReference>
<dbReference type="RefSeq" id="NP_001077552.1">
    <property type="nucleotide sequence ID" value="NM_001084083.2"/>
</dbReference>
<dbReference type="PaxDb" id="3702-AT1G17235.1"/>
<dbReference type="EnsemblPlants" id="AT1G17235.1">
    <property type="protein sequence ID" value="AT1G17235.1"/>
    <property type="gene ID" value="AT1G17235"/>
</dbReference>
<dbReference type="GeneID" id="5007700"/>
<dbReference type="Gramene" id="AT1G17235.1">
    <property type="protein sequence ID" value="AT1G17235.1"/>
    <property type="gene ID" value="AT1G17235"/>
</dbReference>
<dbReference type="KEGG" id="ath:AT1G17235"/>
<dbReference type="Araport" id="AT1G17235"/>
<dbReference type="TAIR" id="AT1G17235">
    <property type="gene designation" value="RTFL11"/>
</dbReference>
<dbReference type="HOGENOM" id="CLU_167101_0_0_1"/>
<dbReference type="InParanoid" id="A8MS09"/>
<dbReference type="OMA" id="IIRLCAT"/>
<dbReference type="OrthoDB" id="1693826at2759"/>
<dbReference type="PhylomeDB" id="A8MS09"/>
<dbReference type="PRO" id="PR:A8MS09"/>
<dbReference type="Proteomes" id="UP000006548">
    <property type="component" value="Chromosome 1"/>
</dbReference>
<dbReference type="ExpressionAtlas" id="A8MS09">
    <property type="expression patterns" value="baseline and differential"/>
</dbReference>
<dbReference type="GO" id="GO:0005886">
    <property type="term" value="C:plasma membrane"/>
    <property type="evidence" value="ECO:0000250"/>
    <property type="project" value="UniProtKB"/>
</dbReference>
<dbReference type="GO" id="GO:0008285">
    <property type="term" value="P:negative regulation of cell population proliferation"/>
    <property type="evidence" value="ECO:0000250"/>
    <property type="project" value="UniProtKB"/>
</dbReference>
<gene>
    <name evidence="5" type="primary">DVL24</name>
    <name evidence="4" type="synonym">RTFL11</name>
    <name evidence="6" type="ordered locus">At1g17235</name>
    <name evidence="7" type="ORF">F20D23</name>
</gene>
<name>DVL24_ARATH</name>
<feature type="chain" id="PRO_0000452792" description="Small polypeptide DEVIL 24">
    <location>
        <begin position="1"/>
        <end position="119"/>
    </location>
</feature>
<feature type="transmembrane region" description="Helical" evidence="3">
    <location>
        <begin position="96"/>
        <end position="113"/>
    </location>
</feature>
<feature type="region of interest" description="Required for DVL/RTFL small polypeptide activity" evidence="2">
    <location>
        <begin position="83"/>
        <end position="114"/>
    </location>
</feature>
<feature type="sequence conflict" description="In Ref. 3; EG521118." evidence="5" ref="3">
    <original>F</original>
    <variation>L</variation>
    <location>
        <position position="84"/>
    </location>
</feature>
<feature type="sequence conflict" description="In Ref. 3; EG521118." evidence="5" ref="3">
    <original>S</original>
    <variation>F</variation>
    <location>
        <position position="90"/>
    </location>
</feature>
<feature type="sequence conflict" description="In Ref. 3; EG521118." evidence="5" ref="3">
    <original>L</original>
    <variation>F</variation>
    <location>
        <position position="104"/>
    </location>
</feature>
<proteinExistence type="inferred from homology"/>
<reference key="1">
    <citation type="journal article" date="2000" name="Nature">
        <title>Sequence and analysis of chromosome 1 of the plant Arabidopsis thaliana.</title>
        <authorList>
            <person name="Theologis A."/>
            <person name="Ecker J.R."/>
            <person name="Palm C.J."/>
            <person name="Federspiel N.A."/>
            <person name="Kaul S."/>
            <person name="White O."/>
            <person name="Alonso J."/>
            <person name="Altafi H."/>
            <person name="Araujo R."/>
            <person name="Bowman C.L."/>
            <person name="Brooks S.Y."/>
            <person name="Buehler E."/>
            <person name="Chan A."/>
            <person name="Chao Q."/>
            <person name="Chen H."/>
            <person name="Cheuk R.F."/>
            <person name="Chin C.W."/>
            <person name="Chung M.K."/>
            <person name="Conn L."/>
            <person name="Conway A.B."/>
            <person name="Conway A.R."/>
            <person name="Creasy T.H."/>
            <person name="Dewar K."/>
            <person name="Dunn P."/>
            <person name="Etgu P."/>
            <person name="Feldblyum T.V."/>
            <person name="Feng J.-D."/>
            <person name="Fong B."/>
            <person name="Fujii C.Y."/>
            <person name="Gill J.E."/>
            <person name="Goldsmith A.D."/>
            <person name="Haas B."/>
            <person name="Hansen N.F."/>
            <person name="Hughes B."/>
            <person name="Huizar L."/>
            <person name="Hunter J.L."/>
            <person name="Jenkins J."/>
            <person name="Johnson-Hopson C."/>
            <person name="Khan S."/>
            <person name="Khaykin E."/>
            <person name="Kim C.J."/>
            <person name="Koo H.L."/>
            <person name="Kremenetskaia I."/>
            <person name="Kurtz D.B."/>
            <person name="Kwan A."/>
            <person name="Lam B."/>
            <person name="Langin-Hooper S."/>
            <person name="Lee A."/>
            <person name="Lee J.M."/>
            <person name="Lenz C.A."/>
            <person name="Li J.H."/>
            <person name="Li Y.-P."/>
            <person name="Lin X."/>
            <person name="Liu S.X."/>
            <person name="Liu Z.A."/>
            <person name="Luros J.S."/>
            <person name="Maiti R."/>
            <person name="Marziali A."/>
            <person name="Militscher J."/>
            <person name="Miranda M."/>
            <person name="Nguyen M."/>
            <person name="Nierman W.C."/>
            <person name="Osborne B.I."/>
            <person name="Pai G."/>
            <person name="Peterson J."/>
            <person name="Pham P.K."/>
            <person name="Rizzo M."/>
            <person name="Rooney T."/>
            <person name="Rowley D."/>
            <person name="Sakano H."/>
            <person name="Salzberg S.L."/>
            <person name="Schwartz J.R."/>
            <person name="Shinn P."/>
            <person name="Southwick A.M."/>
            <person name="Sun H."/>
            <person name="Tallon L.J."/>
            <person name="Tambunga G."/>
            <person name="Toriumi M.J."/>
            <person name="Town C.D."/>
            <person name="Utterback T."/>
            <person name="Van Aken S."/>
            <person name="Vaysberg M."/>
            <person name="Vysotskaia V.S."/>
            <person name="Walker M."/>
            <person name="Wu D."/>
            <person name="Yu G."/>
            <person name="Fraser C.M."/>
            <person name="Venter J.C."/>
            <person name="Davis R.W."/>
        </authorList>
    </citation>
    <scope>NUCLEOTIDE SEQUENCE [LARGE SCALE GENOMIC DNA]</scope>
    <source>
        <strain>cv. Columbia</strain>
    </source>
</reference>
<reference key="2">
    <citation type="journal article" date="2017" name="Plant J.">
        <title>Araport11: a complete reannotation of the Arabidopsis thaliana reference genome.</title>
        <authorList>
            <person name="Cheng C.Y."/>
            <person name="Krishnakumar V."/>
            <person name="Chan A.P."/>
            <person name="Thibaud-Nissen F."/>
            <person name="Schobel S."/>
            <person name="Town C.D."/>
        </authorList>
    </citation>
    <scope>GENOME REANNOTATION</scope>
    <source>
        <strain>cv. Columbia</strain>
    </source>
</reference>
<reference key="3">
    <citation type="journal article" date="2005" name="Plant Physiol.">
        <title>Analysis of the cDNAs of hypothetical genes on Arabidopsis chromosome 2 reveals numerous transcript variants.</title>
        <authorList>
            <person name="Xiao Y.-L."/>
            <person name="Smith S.R."/>
            <person name="Ishmael N."/>
            <person name="Redman J.C."/>
            <person name="Kumar N."/>
            <person name="Monaghan E.L."/>
            <person name="Ayele M."/>
            <person name="Haas B.J."/>
            <person name="Wu H.C."/>
            <person name="Town C.D."/>
        </authorList>
    </citation>
    <scope>NUCLEOTIDE SEQUENCE [LARGE SCALE MRNA] OF 29-119</scope>
    <source>
        <strain>cv. Columbia</strain>
    </source>
</reference>
<reference key="4">
    <citation type="journal article" date="2004" name="Plant J.">
        <title>DVL, a novel class of small polypeptides: overexpression alters Arabidopsis development.</title>
        <authorList>
            <person name="Wen J."/>
            <person name="Lease K.A."/>
            <person name="Walker J.C."/>
        </authorList>
    </citation>
    <scope>GENE FAMILY</scope>
    <scope>NOMENCLATURE</scope>
    <source>
        <strain>cv. Columbia</strain>
    </source>
</reference>
<reference key="5">
    <citation type="journal article" date="2004" name="Plant J.">
        <title>Overexpression of a novel small peptide ROTUNDIFOLIA4 decreases cell proliferation and alters leaf shape in Arabidopsis thaliana.</title>
        <authorList>
            <person name="Narita N.N."/>
            <person name="Moore S."/>
            <person name="Horiguchi G."/>
            <person name="Kubo M."/>
            <person name="Demura T."/>
            <person name="Fukuda H."/>
            <person name="Goodrich J."/>
            <person name="Tsukaya H."/>
        </authorList>
    </citation>
    <scope>GENE FAMILY</scope>
    <source>
        <strain>cv. Columbia</strain>
        <strain>cv. Landsberg erecta</strain>
    </source>
</reference>
<reference key="6">
    <citation type="journal article" date="2015" name="J. Plant Res.">
        <title>Comparative analysis of the RTFL peptide family on the control of plant organogenesis.</title>
        <authorList>
            <person name="Guo P."/>
            <person name="Yoshimura A."/>
            <person name="Ishikawa N."/>
            <person name="Yamaguchi T."/>
            <person name="Guo Y."/>
            <person name="Tsukaya H."/>
        </authorList>
    </citation>
    <scope>REVIEW</scope>
    <scope>GENE FAMILY</scope>
    <scope>NOMENCLATURE</scope>
    <source>
        <strain>cv. Columbia</strain>
    </source>
</reference>
<keyword id="KW-1003">Cell membrane</keyword>
<keyword id="KW-0217">Developmental protein</keyword>
<keyword id="KW-0472">Membrane</keyword>
<keyword id="KW-1185">Reference proteome</keyword>
<keyword id="KW-0812">Transmembrane</keyword>
<keyword id="KW-1133">Transmembrane helix</keyword>